<organism>
    <name type="scientific">Pseudoalteromonas translucida (strain TAC 125)</name>
    <dbReference type="NCBI Taxonomy" id="326442"/>
    <lineage>
        <taxon>Bacteria</taxon>
        <taxon>Pseudomonadati</taxon>
        <taxon>Pseudomonadota</taxon>
        <taxon>Gammaproteobacteria</taxon>
        <taxon>Alteromonadales</taxon>
        <taxon>Pseudoalteromonadaceae</taxon>
        <taxon>Pseudoalteromonas</taxon>
    </lineage>
</organism>
<gene>
    <name evidence="1" type="primary">ileS</name>
    <name type="ordered locus">PSHAa0918</name>
</gene>
<accession>Q3IEA2</accession>
<protein>
    <recommendedName>
        <fullName evidence="1">Isoleucine--tRNA ligase</fullName>
        <ecNumber evidence="1">6.1.1.5</ecNumber>
    </recommendedName>
    <alternativeName>
        <fullName evidence="1">Isoleucyl-tRNA synthetase</fullName>
        <shortName evidence="1">IleRS</shortName>
    </alternativeName>
</protein>
<dbReference type="EC" id="6.1.1.5" evidence="1"/>
<dbReference type="EMBL" id="CR954246">
    <property type="protein sequence ID" value="CAI85997.1"/>
    <property type="molecule type" value="Genomic_DNA"/>
</dbReference>
<dbReference type="SMR" id="Q3IEA2"/>
<dbReference type="STRING" id="326442.PSHAa0918"/>
<dbReference type="KEGG" id="pha:PSHAa0918"/>
<dbReference type="PATRIC" id="fig|326442.8.peg.879"/>
<dbReference type="eggNOG" id="COG0060">
    <property type="taxonomic scope" value="Bacteria"/>
</dbReference>
<dbReference type="HOGENOM" id="CLU_001493_7_1_6"/>
<dbReference type="BioCyc" id="PHAL326442:PSHA_RS04480-MONOMER"/>
<dbReference type="Proteomes" id="UP000006843">
    <property type="component" value="Chromosome I"/>
</dbReference>
<dbReference type="GO" id="GO:0005829">
    <property type="term" value="C:cytosol"/>
    <property type="evidence" value="ECO:0007669"/>
    <property type="project" value="TreeGrafter"/>
</dbReference>
<dbReference type="GO" id="GO:0002161">
    <property type="term" value="F:aminoacyl-tRNA deacylase activity"/>
    <property type="evidence" value="ECO:0007669"/>
    <property type="project" value="InterPro"/>
</dbReference>
<dbReference type="GO" id="GO:0005524">
    <property type="term" value="F:ATP binding"/>
    <property type="evidence" value="ECO:0007669"/>
    <property type="project" value="UniProtKB-UniRule"/>
</dbReference>
<dbReference type="GO" id="GO:0004822">
    <property type="term" value="F:isoleucine-tRNA ligase activity"/>
    <property type="evidence" value="ECO:0007669"/>
    <property type="project" value="UniProtKB-UniRule"/>
</dbReference>
<dbReference type="GO" id="GO:0000049">
    <property type="term" value="F:tRNA binding"/>
    <property type="evidence" value="ECO:0007669"/>
    <property type="project" value="InterPro"/>
</dbReference>
<dbReference type="GO" id="GO:0008270">
    <property type="term" value="F:zinc ion binding"/>
    <property type="evidence" value="ECO:0007669"/>
    <property type="project" value="UniProtKB-UniRule"/>
</dbReference>
<dbReference type="GO" id="GO:0006428">
    <property type="term" value="P:isoleucyl-tRNA aminoacylation"/>
    <property type="evidence" value="ECO:0007669"/>
    <property type="project" value="UniProtKB-UniRule"/>
</dbReference>
<dbReference type="CDD" id="cd07960">
    <property type="entry name" value="Anticodon_Ia_Ile_BEm"/>
    <property type="match status" value="1"/>
</dbReference>
<dbReference type="CDD" id="cd00818">
    <property type="entry name" value="IleRS_core"/>
    <property type="match status" value="1"/>
</dbReference>
<dbReference type="FunFam" id="1.10.730.20:FF:000001">
    <property type="entry name" value="Isoleucine--tRNA ligase"/>
    <property type="match status" value="1"/>
</dbReference>
<dbReference type="FunFam" id="3.40.50.620:FF:000048">
    <property type="entry name" value="Isoleucine--tRNA ligase"/>
    <property type="match status" value="1"/>
</dbReference>
<dbReference type="FunFam" id="3.40.50.620:FF:000168">
    <property type="entry name" value="Isoleucine--tRNA ligase"/>
    <property type="match status" value="1"/>
</dbReference>
<dbReference type="Gene3D" id="1.10.730.20">
    <property type="match status" value="1"/>
</dbReference>
<dbReference type="Gene3D" id="3.40.50.620">
    <property type="entry name" value="HUPs"/>
    <property type="match status" value="2"/>
</dbReference>
<dbReference type="Gene3D" id="3.90.740.10">
    <property type="entry name" value="Valyl/Leucyl/Isoleucyl-tRNA synthetase, editing domain"/>
    <property type="match status" value="1"/>
</dbReference>
<dbReference type="HAMAP" id="MF_02002">
    <property type="entry name" value="Ile_tRNA_synth_type1"/>
    <property type="match status" value="1"/>
</dbReference>
<dbReference type="InterPro" id="IPR001412">
    <property type="entry name" value="aa-tRNA-synth_I_CS"/>
</dbReference>
<dbReference type="InterPro" id="IPR002300">
    <property type="entry name" value="aa-tRNA-synth_Ia"/>
</dbReference>
<dbReference type="InterPro" id="IPR033708">
    <property type="entry name" value="Anticodon_Ile_BEm"/>
</dbReference>
<dbReference type="InterPro" id="IPR002301">
    <property type="entry name" value="Ile-tRNA-ligase"/>
</dbReference>
<dbReference type="InterPro" id="IPR023585">
    <property type="entry name" value="Ile-tRNA-ligase_type1"/>
</dbReference>
<dbReference type="InterPro" id="IPR050081">
    <property type="entry name" value="Ile-tRNA_ligase"/>
</dbReference>
<dbReference type="InterPro" id="IPR013155">
    <property type="entry name" value="M/V/L/I-tRNA-synth_anticd-bd"/>
</dbReference>
<dbReference type="InterPro" id="IPR014729">
    <property type="entry name" value="Rossmann-like_a/b/a_fold"/>
</dbReference>
<dbReference type="InterPro" id="IPR009080">
    <property type="entry name" value="tRNAsynth_Ia_anticodon-bd"/>
</dbReference>
<dbReference type="InterPro" id="IPR009008">
    <property type="entry name" value="Val/Leu/Ile-tRNA-synth_edit"/>
</dbReference>
<dbReference type="InterPro" id="IPR010663">
    <property type="entry name" value="Znf_FPG/IleRS"/>
</dbReference>
<dbReference type="NCBIfam" id="TIGR00392">
    <property type="entry name" value="ileS"/>
    <property type="match status" value="1"/>
</dbReference>
<dbReference type="PANTHER" id="PTHR42765:SF1">
    <property type="entry name" value="ISOLEUCINE--TRNA LIGASE, MITOCHONDRIAL"/>
    <property type="match status" value="1"/>
</dbReference>
<dbReference type="PANTHER" id="PTHR42765">
    <property type="entry name" value="SOLEUCYL-TRNA SYNTHETASE"/>
    <property type="match status" value="1"/>
</dbReference>
<dbReference type="Pfam" id="PF08264">
    <property type="entry name" value="Anticodon_1"/>
    <property type="match status" value="1"/>
</dbReference>
<dbReference type="Pfam" id="PF00133">
    <property type="entry name" value="tRNA-synt_1"/>
    <property type="match status" value="1"/>
</dbReference>
<dbReference type="Pfam" id="PF06827">
    <property type="entry name" value="zf-FPG_IleRS"/>
    <property type="match status" value="1"/>
</dbReference>
<dbReference type="PRINTS" id="PR00984">
    <property type="entry name" value="TRNASYNTHILE"/>
</dbReference>
<dbReference type="SUPFAM" id="SSF47323">
    <property type="entry name" value="Anticodon-binding domain of a subclass of class I aminoacyl-tRNA synthetases"/>
    <property type="match status" value="1"/>
</dbReference>
<dbReference type="SUPFAM" id="SSF52374">
    <property type="entry name" value="Nucleotidylyl transferase"/>
    <property type="match status" value="1"/>
</dbReference>
<dbReference type="SUPFAM" id="SSF50677">
    <property type="entry name" value="ValRS/IleRS/LeuRS editing domain"/>
    <property type="match status" value="1"/>
</dbReference>
<dbReference type="PROSITE" id="PS00178">
    <property type="entry name" value="AA_TRNA_LIGASE_I"/>
    <property type="match status" value="1"/>
</dbReference>
<name>SYI_PSET1</name>
<feature type="chain" id="PRO_0000098443" description="Isoleucine--tRNA ligase">
    <location>
        <begin position="1"/>
        <end position="942"/>
    </location>
</feature>
<feature type="short sequence motif" description="'HIGH' region">
    <location>
        <begin position="58"/>
        <end position="68"/>
    </location>
</feature>
<feature type="short sequence motif" description="'KMSKS' region">
    <location>
        <begin position="608"/>
        <end position="612"/>
    </location>
</feature>
<feature type="binding site" evidence="1">
    <location>
        <position position="567"/>
    </location>
    <ligand>
        <name>L-isoleucyl-5'-AMP</name>
        <dbReference type="ChEBI" id="CHEBI:178002"/>
    </ligand>
</feature>
<feature type="binding site" evidence="1">
    <location>
        <position position="611"/>
    </location>
    <ligand>
        <name>ATP</name>
        <dbReference type="ChEBI" id="CHEBI:30616"/>
    </ligand>
</feature>
<feature type="binding site" evidence="1">
    <location>
        <position position="905"/>
    </location>
    <ligand>
        <name>Zn(2+)</name>
        <dbReference type="ChEBI" id="CHEBI:29105"/>
    </ligand>
</feature>
<feature type="binding site" evidence="1">
    <location>
        <position position="908"/>
    </location>
    <ligand>
        <name>Zn(2+)</name>
        <dbReference type="ChEBI" id="CHEBI:29105"/>
    </ligand>
</feature>
<feature type="binding site" evidence="1">
    <location>
        <position position="925"/>
    </location>
    <ligand>
        <name>Zn(2+)</name>
        <dbReference type="ChEBI" id="CHEBI:29105"/>
    </ligand>
</feature>
<feature type="binding site" evidence="1">
    <location>
        <position position="928"/>
    </location>
    <ligand>
        <name>Zn(2+)</name>
        <dbReference type="ChEBI" id="CHEBI:29105"/>
    </ligand>
</feature>
<reference key="1">
    <citation type="journal article" date="2005" name="Genome Res.">
        <title>Coping with cold: the genome of the versatile marine Antarctica bacterium Pseudoalteromonas haloplanktis TAC125.</title>
        <authorList>
            <person name="Medigue C."/>
            <person name="Krin E."/>
            <person name="Pascal G."/>
            <person name="Barbe V."/>
            <person name="Bernsel A."/>
            <person name="Bertin P.N."/>
            <person name="Cheung F."/>
            <person name="Cruveiller S."/>
            <person name="D'Amico S."/>
            <person name="Duilio A."/>
            <person name="Fang G."/>
            <person name="Feller G."/>
            <person name="Ho C."/>
            <person name="Mangenot S."/>
            <person name="Marino G."/>
            <person name="Nilsson J."/>
            <person name="Parrilli E."/>
            <person name="Rocha E.P.C."/>
            <person name="Rouy Z."/>
            <person name="Sekowska A."/>
            <person name="Tutino M.L."/>
            <person name="Vallenet D."/>
            <person name="von Heijne G."/>
            <person name="Danchin A."/>
        </authorList>
    </citation>
    <scope>NUCLEOTIDE SEQUENCE [LARGE SCALE GENOMIC DNA]</scope>
    <source>
        <strain>TAC 125</strain>
    </source>
</reference>
<keyword id="KW-0030">Aminoacyl-tRNA synthetase</keyword>
<keyword id="KW-0067">ATP-binding</keyword>
<keyword id="KW-0963">Cytoplasm</keyword>
<keyword id="KW-0436">Ligase</keyword>
<keyword id="KW-0479">Metal-binding</keyword>
<keyword id="KW-0547">Nucleotide-binding</keyword>
<keyword id="KW-0648">Protein biosynthesis</keyword>
<keyword id="KW-1185">Reference proteome</keyword>
<keyword id="KW-0862">Zinc</keyword>
<proteinExistence type="inferred from homology"/>
<comment type="function">
    <text evidence="1">Catalyzes the attachment of isoleucine to tRNA(Ile). As IleRS can inadvertently accommodate and process structurally similar amino acids such as valine, to avoid such errors it has two additional distinct tRNA(Ile)-dependent editing activities. One activity is designated as 'pretransfer' editing and involves the hydrolysis of activated Val-AMP. The other activity is designated 'posttransfer' editing and involves deacylation of mischarged Val-tRNA(Ile).</text>
</comment>
<comment type="catalytic activity">
    <reaction evidence="1">
        <text>tRNA(Ile) + L-isoleucine + ATP = L-isoleucyl-tRNA(Ile) + AMP + diphosphate</text>
        <dbReference type="Rhea" id="RHEA:11060"/>
        <dbReference type="Rhea" id="RHEA-COMP:9666"/>
        <dbReference type="Rhea" id="RHEA-COMP:9695"/>
        <dbReference type="ChEBI" id="CHEBI:30616"/>
        <dbReference type="ChEBI" id="CHEBI:33019"/>
        <dbReference type="ChEBI" id="CHEBI:58045"/>
        <dbReference type="ChEBI" id="CHEBI:78442"/>
        <dbReference type="ChEBI" id="CHEBI:78528"/>
        <dbReference type="ChEBI" id="CHEBI:456215"/>
        <dbReference type="EC" id="6.1.1.5"/>
    </reaction>
</comment>
<comment type="cofactor">
    <cofactor evidence="1">
        <name>Zn(2+)</name>
        <dbReference type="ChEBI" id="CHEBI:29105"/>
    </cofactor>
    <text evidence="1">Binds 1 zinc ion per subunit.</text>
</comment>
<comment type="subunit">
    <text evidence="1">Monomer.</text>
</comment>
<comment type="subcellular location">
    <subcellularLocation>
        <location evidence="1">Cytoplasm</location>
    </subcellularLocation>
</comment>
<comment type="domain">
    <text evidence="1">IleRS has two distinct active sites: one for aminoacylation and one for editing. The misactivated valine is translocated from the active site to the editing site, which sterically excludes the correctly activated isoleucine. The single editing site contains two valyl binding pockets, one specific for each substrate (Val-AMP or Val-tRNA(Ile)).</text>
</comment>
<comment type="similarity">
    <text evidence="1">Belongs to the class-I aminoacyl-tRNA synthetase family. IleS type 1 subfamily.</text>
</comment>
<evidence type="ECO:0000255" key="1">
    <source>
        <dbReference type="HAMAP-Rule" id="MF_02002"/>
    </source>
</evidence>
<sequence>MSDYKHTLNLPETPFPMRGNLAQREPKMLKAWYEDDLYGQIRSAKKGKKTFILHDGPPYANGDIHLGHSVNKILKDIIVKSKTLSDFDSPLVPGWDCHGLPIELMVEKKVGKPGVKVTASEFREKCRAYAKKQVEGQKVDFKRLGVFADWDKPYLTMNFDFEANAIRVLGRIIEKGHLHKGAKPVHWCTDCGSALAEAEVEYQDKQSPAIDVRFIFNDQDAVVSAFDLADGHKGTGKVGTVIWTTTPWTLPANRAVAVHAELEYALVQVEDEGKQQRLILGSELVKDAMDRFGFNQFHVLGYVKGAALENLQVAHPFYDFSVPVIVAEHVTTDSGTGVVHTAPGHGQEDFVAGLEYKLEVANPVGANGVYLPDTELFAGQHVFKANASIVEVLKEHGALMHHHAITHSYPHCWRHKTPIIFRATPQWFISMDQANLRQDSLNEIKNTQWLPEWGESRIANMVEGRPDWCISRQRTWGVPIALFADKDTGAIHPNTQELIEQAAQLVEKSGIQAWYDLDPATLLGEEDAKQYMKVQDTLDVWFDSGVSHACVVDAREDLTGPADLYLEGSDQHRGWFMSSMMTSVAINGHAPYRQVLTHGFTVDENGRKMSKSLGNVISPQNVMNKLGADILRLWVASTDYTAEMTVSDEIFNRSADRYRRIRNTSRYLLANLNGFDPKTDQVAVNDMVELDKWIVGRAAQLQTEILAAYDSYQMLLVTQKLMNFCTGELGSFYLDVIKDRQYTAKSDSHARRSCQTALYHIAEAMTRWMAPIMSFTAQEIWEALPGERSDYVFTSTWYEGLQAPTNSQFSNDDWLEILTVRDEVNRLLEAARKEEVIGATLQATVNLYTGKALAAKLLALGDELRFVFLTSAVNVTEVDSQPADTQTTEIDGLYISVAATDAQKCERCWHYSADVGVEPAHPEICGRCVSNVDGEGEQRQFA</sequence>